<dbReference type="EMBL" id="EU926144">
    <property type="protein sequence ID" value="ACI41476.1"/>
    <property type="molecule type" value="mRNA"/>
</dbReference>
<dbReference type="EMBL" id="FM864148">
    <property type="protein sequence ID" value="CAS03745.1"/>
    <property type="molecule type" value="mRNA"/>
</dbReference>
<dbReference type="SMR" id="B6DD60"/>
<dbReference type="ArachnoServer" id="AS001083">
    <property type="toxin name" value="U20-lycotoxin-Ls1a"/>
</dbReference>
<dbReference type="GO" id="GO:0005576">
    <property type="term" value="C:extracellular region"/>
    <property type="evidence" value="ECO:0007669"/>
    <property type="project" value="UniProtKB-SubCell"/>
</dbReference>
<dbReference type="GO" id="GO:0090729">
    <property type="term" value="F:toxin activity"/>
    <property type="evidence" value="ECO:0007669"/>
    <property type="project" value="UniProtKB-KW"/>
</dbReference>
<dbReference type="GO" id="GO:0042742">
    <property type="term" value="P:defense response to bacterium"/>
    <property type="evidence" value="ECO:0007669"/>
    <property type="project" value="UniProtKB-KW"/>
</dbReference>
<dbReference type="InterPro" id="IPR036645">
    <property type="entry name" value="Elafin-like_sf"/>
</dbReference>
<dbReference type="SUPFAM" id="SSF57256">
    <property type="entry name" value="Elafin-like"/>
    <property type="match status" value="1"/>
</dbReference>
<name>TXK01_LYCSI</name>
<sequence length="104" mass="11400">MFSTSDQVSKMNSRILSALLILGIATCVIAGGFCPKSRHPQCNLSYKINDCCAQSDCRVGSVCCVEGCGNVCRAESDTPLGEKFVDGSECKHGHVFPKKWYQFW</sequence>
<organism>
    <name type="scientific">Lycosa singoriensis</name>
    <name type="common">Wolf spider</name>
    <name type="synonym">Aranea singoriensis</name>
    <dbReference type="NCBI Taxonomy" id="434756"/>
    <lineage>
        <taxon>Eukaryota</taxon>
        <taxon>Metazoa</taxon>
        <taxon>Ecdysozoa</taxon>
        <taxon>Arthropoda</taxon>
        <taxon>Chelicerata</taxon>
        <taxon>Arachnida</taxon>
        <taxon>Araneae</taxon>
        <taxon>Araneomorphae</taxon>
        <taxon>Entelegynae</taxon>
        <taxon>Lycosoidea</taxon>
        <taxon>Lycosidae</taxon>
        <taxon>Lycosa</taxon>
    </lineage>
</organism>
<feature type="signal peptide" evidence="2">
    <location>
        <begin position="1"/>
        <end position="30"/>
    </location>
</feature>
<feature type="chain" id="PRO_0000401909" description="U20-lycotoxin-Ls1a">
    <location>
        <begin position="31"/>
        <end position="104"/>
    </location>
</feature>
<feature type="domain" description="WAP">
    <location>
        <begin position="31"/>
        <end position="76"/>
    </location>
</feature>
<feature type="disulfide bond" evidence="1">
    <location>
        <begin position="34"/>
        <end position="64"/>
    </location>
</feature>
<feature type="disulfide bond" evidence="1">
    <location>
        <begin position="42"/>
        <end position="68"/>
    </location>
</feature>
<feature type="disulfide bond" evidence="1">
    <location>
        <begin position="51"/>
        <end position="63"/>
    </location>
</feature>
<feature type="disulfide bond" evidence="3">
    <location>
        <begin position="52"/>
        <end position="90"/>
    </location>
</feature>
<feature type="disulfide bond" evidence="1">
    <location>
        <begin position="57"/>
        <end position="72"/>
    </location>
</feature>
<protein>
    <recommendedName>
        <fullName>U20-lycotoxin-Ls1a</fullName>
    </recommendedName>
    <alternativeName>
        <fullName>Toxin-like structure LSTX-Q1</fullName>
    </alternativeName>
</protein>
<keyword id="KW-0044">Antibiotic</keyword>
<keyword id="KW-0929">Antimicrobial</keyword>
<keyword id="KW-1015">Disulfide bond</keyword>
<keyword id="KW-0964">Secreted</keyword>
<keyword id="KW-0732">Signal</keyword>
<keyword id="KW-0800">Toxin</keyword>
<comment type="function">
    <text evidence="1">Has antibacterial activity.</text>
</comment>
<comment type="subcellular location">
    <subcellularLocation>
        <location evidence="1">Secreted</location>
    </subcellularLocation>
</comment>
<comment type="tissue specificity">
    <text>Expressed by the venom gland.</text>
</comment>
<comment type="PTM">
    <text evidence="3">Contains 5 disulfide bonds.</text>
</comment>
<comment type="similarity">
    <text evidence="3">Belongs to the venom protein 11 family. 02 (wap-2) subfamily.</text>
</comment>
<accession>B6DD60</accession>
<proteinExistence type="evidence at transcript level"/>
<reference key="1">
    <citation type="journal article" date="2010" name="Zoology">
        <title>Transcriptome analysis of the venom glands of the Chinese wolf spider Lycosa singoriensis.</title>
        <authorList>
            <person name="Zhang Y."/>
            <person name="Chen J."/>
            <person name="Tang X."/>
            <person name="Wang F."/>
            <person name="Jiang L."/>
            <person name="Xiong X."/>
            <person name="Wang M."/>
            <person name="Rong M."/>
            <person name="Liu Z."/>
            <person name="Liang S."/>
        </authorList>
    </citation>
    <scope>NUCLEOTIDE SEQUENCE [LARGE SCALE MRNA]</scope>
    <source>
        <tissue>Venom gland</tissue>
    </source>
</reference>
<evidence type="ECO:0000250" key="1"/>
<evidence type="ECO:0000255" key="2"/>
<evidence type="ECO:0000305" key="3"/>